<proteinExistence type="inferred from homology"/>
<keyword id="KW-0028">Amino-acid biosynthesis</keyword>
<keyword id="KW-0055">Arginine biosynthesis</keyword>
<keyword id="KW-0067">ATP-binding</keyword>
<keyword id="KW-0963">Cytoplasm</keyword>
<keyword id="KW-0436">Ligase</keyword>
<keyword id="KW-0547">Nucleotide-binding</keyword>
<keyword id="KW-1185">Reference proteome</keyword>
<reference key="1">
    <citation type="journal article" date="2008" name="PLoS ONE">
        <title>Genome sequence of the saprophyte Leptospira biflexa provides insights into the evolution of Leptospira and the pathogenesis of leptospirosis.</title>
        <authorList>
            <person name="Picardeau M."/>
            <person name="Bulach D.M."/>
            <person name="Bouchier C."/>
            <person name="Zuerner R.L."/>
            <person name="Zidane N."/>
            <person name="Wilson P.J."/>
            <person name="Creno S."/>
            <person name="Kuczek E.S."/>
            <person name="Bommezzadri S."/>
            <person name="Davis J.C."/>
            <person name="McGrath A."/>
            <person name="Johnson M.J."/>
            <person name="Boursaux-Eude C."/>
            <person name="Seemann T."/>
            <person name="Rouy Z."/>
            <person name="Coppel R.L."/>
            <person name="Rood J.I."/>
            <person name="Lajus A."/>
            <person name="Davies J.K."/>
            <person name="Medigue C."/>
            <person name="Adler B."/>
        </authorList>
    </citation>
    <scope>NUCLEOTIDE SEQUENCE [LARGE SCALE GENOMIC DNA]</scope>
    <source>
        <strain>Patoc 1 / ATCC 23582 / Paris</strain>
    </source>
</reference>
<gene>
    <name evidence="1" type="primary">argG</name>
    <name type="ordered locus">LEPBI_I0087</name>
</gene>
<sequence length="402" mass="45184">MKEKPAPKKIVLAYSGGLDTSVILAWLKDTYGCEVIAFCADVGQKEELTGLEEKGKNTGASKVYIQDLRLEFARDFIYPAIRGNAIYEMRYLLGTSLARPLIAKAMADVAKKEGADAFSHGATGKGNDQVRFELTFKALSPNLQIIAPWRTWDFGGRADLIEYAKKKGIPVPVTAAKPYSMDRNLMHLSFEGGILEDPYNEPKEDMFILTVSPEKAPDKPTYLELDFENGDCVAIDGKKMNPLEVMETLNDLGGKNGVGRVDIVENRLVGIKSRGVYETPGGTILHIAHRDLESITLDRDTQHKKDELSQEFARYIYNGQWYSNQMNALRAYMDYTQKYVNGTVRIKLYKGNCTVVGRKSNKSLYNAGLSTFEKEELYNQYDAEGFINLYGLPMKEWARVNQ</sequence>
<accession>B0SJR2</accession>
<name>ASSY_LEPBP</name>
<feature type="chain" id="PRO_1000089042" description="Argininosuccinate synthase">
    <location>
        <begin position="1"/>
        <end position="402"/>
    </location>
</feature>
<feature type="binding site" evidence="1">
    <location>
        <begin position="13"/>
        <end position="21"/>
    </location>
    <ligand>
        <name>ATP</name>
        <dbReference type="ChEBI" id="CHEBI:30616"/>
    </ligand>
</feature>
<feature type="binding site" evidence="1">
    <location>
        <position position="40"/>
    </location>
    <ligand>
        <name>ATP</name>
        <dbReference type="ChEBI" id="CHEBI:30616"/>
    </ligand>
</feature>
<feature type="binding site" evidence="1">
    <location>
        <position position="91"/>
    </location>
    <ligand>
        <name>L-citrulline</name>
        <dbReference type="ChEBI" id="CHEBI:57743"/>
    </ligand>
</feature>
<feature type="binding site" evidence="1">
    <location>
        <position position="96"/>
    </location>
    <ligand>
        <name>L-citrulline</name>
        <dbReference type="ChEBI" id="CHEBI:57743"/>
    </ligand>
</feature>
<feature type="binding site" evidence="1">
    <location>
        <position position="121"/>
    </location>
    <ligand>
        <name>ATP</name>
        <dbReference type="ChEBI" id="CHEBI:30616"/>
    </ligand>
</feature>
<feature type="binding site" evidence="1">
    <location>
        <position position="123"/>
    </location>
    <ligand>
        <name>L-aspartate</name>
        <dbReference type="ChEBI" id="CHEBI:29991"/>
    </ligand>
</feature>
<feature type="binding site" evidence="1">
    <location>
        <position position="127"/>
    </location>
    <ligand>
        <name>L-aspartate</name>
        <dbReference type="ChEBI" id="CHEBI:29991"/>
    </ligand>
</feature>
<feature type="binding site" evidence="1">
    <location>
        <position position="127"/>
    </location>
    <ligand>
        <name>L-citrulline</name>
        <dbReference type="ChEBI" id="CHEBI:57743"/>
    </ligand>
</feature>
<feature type="binding site" evidence="1">
    <location>
        <position position="128"/>
    </location>
    <ligand>
        <name>L-aspartate</name>
        <dbReference type="ChEBI" id="CHEBI:29991"/>
    </ligand>
</feature>
<feature type="binding site" evidence="1">
    <location>
        <position position="131"/>
    </location>
    <ligand>
        <name>L-citrulline</name>
        <dbReference type="ChEBI" id="CHEBI:57743"/>
    </ligand>
</feature>
<feature type="binding site" evidence="1">
    <location>
        <position position="180"/>
    </location>
    <ligand>
        <name>L-citrulline</name>
        <dbReference type="ChEBI" id="CHEBI:57743"/>
    </ligand>
</feature>
<feature type="binding site" evidence="1">
    <location>
        <position position="189"/>
    </location>
    <ligand>
        <name>L-citrulline</name>
        <dbReference type="ChEBI" id="CHEBI:57743"/>
    </ligand>
</feature>
<feature type="binding site" evidence="1">
    <location>
        <position position="265"/>
    </location>
    <ligand>
        <name>L-citrulline</name>
        <dbReference type="ChEBI" id="CHEBI:57743"/>
    </ligand>
</feature>
<feature type="binding site" evidence="1">
    <location>
        <position position="277"/>
    </location>
    <ligand>
        <name>L-citrulline</name>
        <dbReference type="ChEBI" id="CHEBI:57743"/>
    </ligand>
</feature>
<organism>
    <name type="scientific">Leptospira biflexa serovar Patoc (strain Patoc 1 / ATCC 23582 / Paris)</name>
    <dbReference type="NCBI Taxonomy" id="456481"/>
    <lineage>
        <taxon>Bacteria</taxon>
        <taxon>Pseudomonadati</taxon>
        <taxon>Spirochaetota</taxon>
        <taxon>Spirochaetia</taxon>
        <taxon>Leptospirales</taxon>
        <taxon>Leptospiraceae</taxon>
        <taxon>Leptospira</taxon>
    </lineage>
</organism>
<dbReference type="EC" id="6.3.4.5" evidence="1"/>
<dbReference type="EMBL" id="CP000786">
    <property type="protein sequence ID" value="ABZ96234.1"/>
    <property type="molecule type" value="Genomic_DNA"/>
</dbReference>
<dbReference type="RefSeq" id="WP_012387124.1">
    <property type="nucleotide sequence ID" value="NC_010602.1"/>
</dbReference>
<dbReference type="SMR" id="B0SJR2"/>
<dbReference type="STRING" id="456481.LEPBI_I0087"/>
<dbReference type="KEGG" id="lbi:LEPBI_I0087"/>
<dbReference type="HOGENOM" id="CLU_032784_4_2_12"/>
<dbReference type="OrthoDB" id="9801641at2"/>
<dbReference type="BioCyc" id="LBIF456481:LEPBI_RS00440-MONOMER"/>
<dbReference type="UniPathway" id="UPA00068">
    <property type="reaction ID" value="UER00113"/>
</dbReference>
<dbReference type="Proteomes" id="UP000001847">
    <property type="component" value="Chromosome I"/>
</dbReference>
<dbReference type="GO" id="GO:0005737">
    <property type="term" value="C:cytoplasm"/>
    <property type="evidence" value="ECO:0007669"/>
    <property type="project" value="UniProtKB-SubCell"/>
</dbReference>
<dbReference type="GO" id="GO:0004055">
    <property type="term" value="F:argininosuccinate synthase activity"/>
    <property type="evidence" value="ECO:0007669"/>
    <property type="project" value="UniProtKB-UniRule"/>
</dbReference>
<dbReference type="GO" id="GO:0005524">
    <property type="term" value="F:ATP binding"/>
    <property type="evidence" value="ECO:0007669"/>
    <property type="project" value="UniProtKB-UniRule"/>
</dbReference>
<dbReference type="GO" id="GO:0000053">
    <property type="term" value="P:argininosuccinate metabolic process"/>
    <property type="evidence" value="ECO:0007669"/>
    <property type="project" value="TreeGrafter"/>
</dbReference>
<dbReference type="GO" id="GO:0006526">
    <property type="term" value="P:L-arginine biosynthetic process"/>
    <property type="evidence" value="ECO:0007669"/>
    <property type="project" value="UniProtKB-UniRule"/>
</dbReference>
<dbReference type="GO" id="GO:0000050">
    <property type="term" value="P:urea cycle"/>
    <property type="evidence" value="ECO:0007669"/>
    <property type="project" value="TreeGrafter"/>
</dbReference>
<dbReference type="CDD" id="cd01999">
    <property type="entry name" value="ASS"/>
    <property type="match status" value="1"/>
</dbReference>
<dbReference type="FunFam" id="3.40.50.620:FF:000019">
    <property type="entry name" value="Argininosuccinate synthase"/>
    <property type="match status" value="1"/>
</dbReference>
<dbReference type="FunFam" id="3.90.1260.10:FF:000007">
    <property type="entry name" value="Argininosuccinate synthase"/>
    <property type="match status" value="1"/>
</dbReference>
<dbReference type="Gene3D" id="3.90.1260.10">
    <property type="entry name" value="Argininosuccinate synthetase, chain A, domain 2"/>
    <property type="match status" value="1"/>
</dbReference>
<dbReference type="Gene3D" id="3.40.50.620">
    <property type="entry name" value="HUPs"/>
    <property type="match status" value="1"/>
</dbReference>
<dbReference type="Gene3D" id="1.20.5.470">
    <property type="entry name" value="Single helix bin"/>
    <property type="match status" value="1"/>
</dbReference>
<dbReference type="HAMAP" id="MF_00005">
    <property type="entry name" value="Arg_succ_synth_type1"/>
    <property type="match status" value="1"/>
</dbReference>
<dbReference type="InterPro" id="IPR048268">
    <property type="entry name" value="Arginosuc_syn_C"/>
</dbReference>
<dbReference type="InterPro" id="IPR048267">
    <property type="entry name" value="Arginosuc_syn_N"/>
</dbReference>
<dbReference type="InterPro" id="IPR001518">
    <property type="entry name" value="Arginosuc_synth"/>
</dbReference>
<dbReference type="InterPro" id="IPR018223">
    <property type="entry name" value="Arginosuc_synth_CS"/>
</dbReference>
<dbReference type="InterPro" id="IPR023434">
    <property type="entry name" value="Arginosuc_synth_type_1_subfam"/>
</dbReference>
<dbReference type="InterPro" id="IPR024074">
    <property type="entry name" value="AS_cat/multimer_dom_body"/>
</dbReference>
<dbReference type="InterPro" id="IPR014729">
    <property type="entry name" value="Rossmann-like_a/b/a_fold"/>
</dbReference>
<dbReference type="NCBIfam" id="TIGR00032">
    <property type="entry name" value="argG"/>
    <property type="match status" value="1"/>
</dbReference>
<dbReference type="NCBIfam" id="NF001770">
    <property type="entry name" value="PRK00509.1"/>
    <property type="match status" value="1"/>
</dbReference>
<dbReference type="PANTHER" id="PTHR11587">
    <property type="entry name" value="ARGININOSUCCINATE SYNTHASE"/>
    <property type="match status" value="1"/>
</dbReference>
<dbReference type="PANTHER" id="PTHR11587:SF2">
    <property type="entry name" value="ARGININOSUCCINATE SYNTHASE"/>
    <property type="match status" value="1"/>
</dbReference>
<dbReference type="Pfam" id="PF20979">
    <property type="entry name" value="Arginosuc_syn_C"/>
    <property type="match status" value="1"/>
</dbReference>
<dbReference type="Pfam" id="PF00764">
    <property type="entry name" value="Arginosuc_synth"/>
    <property type="match status" value="1"/>
</dbReference>
<dbReference type="SUPFAM" id="SSF52402">
    <property type="entry name" value="Adenine nucleotide alpha hydrolases-like"/>
    <property type="match status" value="1"/>
</dbReference>
<dbReference type="SUPFAM" id="SSF69864">
    <property type="entry name" value="Argininosuccinate synthetase, C-terminal domain"/>
    <property type="match status" value="1"/>
</dbReference>
<dbReference type="PROSITE" id="PS00564">
    <property type="entry name" value="ARGININOSUCCIN_SYN_1"/>
    <property type="match status" value="1"/>
</dbReference>
<dbReference type="PROSITE" id="PS00565">
    <property type="entry name" value="ARGININOSUCCIN_SYN_2"/>
    <property type="match status" value="1"/>
</dbReference>
<protein>
    <recommendedName>
        <fullName evidence="1">Argininosuccinate synthase</fullName>
        <ecNumber evidence="1">6.3.4.5</ecNumber>
    </recommendedName>
    <alternativeName>
        <fullName evidence="1">Citrulline--aspartate ligase</fullName>
    </alternativeName>
</protein>
<comment type="catalytic activity">
    <reaction evidence="1">
        <text>L-citrulline + L-aspartate + ATP = 2-(N(omega)-L-arginino)succinate + AMP + diphosphate + H(+)</text>
        <dbReference type="Rhea" id="RHEA:10932"/>
        <dbReference type="ChEBI" id="CHEBI:15378"/>
        <dbReference type="ChEBI" id="CHEBI:29991"/>
        <dbReference type="ChEBI" id="CHEBI:30616"/>
        <dbReference type="ChEBI" id="CHEBI:33019"/>
        <dbReference type="ChEBI" id="CHEBI:57472"/>
        <dbReference type="ChEBI" id="CHEBI:57743"/>
        <dbReference type="ChEBI" id="CHEBI:456215"/>
        <dbReference type="EC" id="6.3.4.5"/>
    </reaction>
</comment>
<comment type="pathway">
    <text evidence="1">Amino-acid biosynthesis; L-arginine biosynthesis; L-arginine from L-ornithine and carbamoyl phosphate: step 2/3.</text>
</comment>
<comment type="subunit">
    <text evidence="1">Homotetramer.</text>
</comment>
<comment type="subcellular location">
    <subcellularLocation>
        <location evidence="1">Cytoplasm</location>
    </subcellularLocation>
</comment>
<comment type="similarity">
    <text evidence="1">Belongs to the argininosuccinate synthase family. Type 1 subfamily.</text>
</comment>
<evidence type="ECO:0000255" key="1">
    <source>
        <dbReference type="HAMAP-Rule" id="MF_00005"/>
    </source>
</evidence>